<dbReference type="EC" id="2.4.1.265" evidence="1"/>
<dbReference type="EMBL" id="CR382136">
    <property type="protein sequence ID" value="CAG87397.1"/>
    <property type="molecule type" value="Genomic_DNA"/>
</dbReference>
<dbReference type="RefSeq" id="XP_459225.1">
    <property type="nucleotide sequence ID" value="XM_459225.1"/>
</dbReference>
<dbReference type="SMR" id="Q6BRE5"/>
<dbReference type="FunCoup" id="Q6BRE5">
    <property type="interactions" value="814"/>
</dbReference>
<dbReference type="STRING" id="284592.Q6BRE5"/>
<dbReference type="CAZy" id="GT57">
    <property type="family name" value="Glycosyltransferase Family 57"/>
</dbReference>
<dbReference type="GeneID" id="2901619"/>
<dbReference type="KEGG" id="dha:DEHA2D17028g"/>
<dbReference type="eggNOG" id="KOG2576">
    <property type="taxonomic scope" value="Eukaryota"/>
</dbReference>
<dbReference type="HOGENOM" id="CLU_022045_1_1_1"/>
<dbReference type="InParanoid" id="Q6BRE5"/>
<dbReference type="OMA" id="YHSTDFD"/>
<dbReference type="OrthoDB" id="1689333at2759"/>
<dbReference type="UniPathway" id="UPA00378"/>
<dbReference type="Proteomes" id="UP000000599">
    <property type="component" value="Chromosome D"/>
</dbReference>
<dbReference type="GO" id="GO:0005789">
    <property type="term" value="C:endoplasmic reticulum membrane"/>
    <property type="evidence" value="ECO:0000250"/>
    <property type="project" value="UniProtKB"/>
</dbReference>
<dbReference type="GO" id="GO:0042283">
    <property type="term" value="F:dolichyl pyrophosphate Glc1Man9GlcNAc2 alpha-1,3-glucosyltransferase activity"/>
    <property type="evidence" value="ECO:0000250"/>
    <property type="project" value="UniProtKB"/>
</dbReference>
<dbReference type="GO" id="GO:0006488">
    <property type="term" value="P:dolichol-linked oligosaccharide biosynthetic process"/>
    <property type="evidence" value="ECO:0000250"/>
    <property type="project" value="UniProtKB"/>
</dbReference>
<dbReference type="GO" id="GO:0006487">
    <property type="term" value="P:protein N-linked glycosylation"/>
    <property type="evidence" value="ECO:0000250"/>
    <property type="project" value="UniProtKB"/>
</dbReference>
<dbReference type="InterPro" id="IPR004856">
    <property type="entry name" value="Glyco_trans_ALG6/ALG8"/>
</dbReference>
<dbReference type="PANTHER" id="PTHR12413">
    <property type="entry name" value="DOLICHYL GLYCOSYLTRANSFERASE"/>
    <property type="match status" value="1"/>
</dbReference>
<dbReference type="PANTHER" id="PTHR12413:SF2">
    <property type="entry name" value="DOLICHYL PYROPHOSPHATE GLC1MAN9GLCNAC2 ALPHA-1,3-GLUCOSYLTRANSFERASE-RELATED"/>
    <property type="match status" value="1"/>
</dbReference>
<dbReference type="Pfam" id="PF03155">
    <property type="entry name" value="Alg6_Alg8"/>
    <property type="match status" value="1"/>
</dbReference>
<accession>Q6BRE5</accession>
<sequence>MSKKSFVKGPSGLPKELNNDKQWNYSLVNIWVASLALKLLLSVGYHSTDFDVHRNWLAITYNLPISKWYIENTSQWTLDYPPFFAYFEWVLASFVPDFVKRDGCLKIVEKGLYSLPTVLFQRLSVIVSEVVLFVSLQWYINSSKTHTEAKRAFVVASSLVLSPGLLIIDHIHFQYNGMLYGILVLMINSARLKKYLMCGFWFSILICFKHIYLYLAPAVFIFLLRAYCLNLNFGKTKSSNILKIVRWKNLFKLSSIVIAVFSIAFGPFIYYEVMPQLIERLFPFNRGLTHAYWAPNVWAIYSAIDRLLIQIYYRIPISRPILLKIFKFNPQYLWDTKLVNKTTRGLIGDVEFLILPTITSQLTFFLTLFYQVMALIPLFLQPTFRRFMGSLTLCGFASFLFGWHVHEKAVLVVIFPMTFLVSRDRDLLGPFNLLVSCAYISLFPLIFTCDEWLIKITYMLLWYIVYYFSLKKVVRLPKTNGGYGKVILDRVNNGYILGLVPVITIVSLIDLFEHKFEILRKLQFMKLLIISVYCGIGIISSWNGFSWLYFVDESIWTDE</sequence>
<comment type="function">
    <text evidence="1">Dolichyl pyrophosphate Glc1Man9GlcNAc2 alpha-1,3-glucosyltransferase that operates in the biosynthetic pathway of dolichol-linked oligosaccharides, the glycan precursors employed in protein asparagine (N)-glycosylation. The assembly of dolichol-linked oligosaccharides begins on the cytosolic side of the endoplasmic reticulum membrane and finishes in its lumen. The sequential addition of sugars to dolichol pyrophosphate produces dolichol-linked oligosaccharides containing fourteen sugars, including two GlcNAcs, nine mannoses and three glucoses. Once assembled, the oligosaccharide is transferred from the lipid to nascent proteins by oligosaccharyltransferases. In the lumen of the endoplasmic reticulum, adds the second glucose residue from dolichyl phosphate glucose (Dol-P-Glc) onto the lipid-linked oligosaccharide intermediate Glc(1)Man(9)GlcNAc(2)-PP-Dol to produce Glc(2)Man(9)GlcNAc(2)-PP-Dol.</text>
</comment>
<comment type="catalytic activity">
    <reaction evidence="1">
        <text>an alpha-D-Glc-(1-&gt;3)-alpha-D-Man-(1-&gt;2)-alpha-D-Man-(1-&gt;2)-alpha-D-Man-(1-&gt;3)-[alpha-D-Man-(1-&gt;2)-alpha-D-Man-(1-&gt;3)-[alpha-D-Man-(1-&gt;2)-alpha-D-Man-(1-&gt;6)]-alpha-D-Man-(1-&gt;6)]-beta-D-Man-(1-&gt;4)-beta-D-GlcNAc-(1-&gt;4)-alpha-D-GlcNAc-diphospho-di-trans,poly-cis-dolichol + a di-trans,poly-cis-dolichyl beta-D-glucosyl phosphate = an alpha-D-Glc-(1-&gt;3)-alpha-D-Glc-(1-&gt;3)-alpha-D-Man-(1-&gt;2)-alpha-D-Man-(1-&gt;2)-alpha-D-Man-(1-&gt;3)-[alpha-D-Man-(1-&gt;2)-alpha-D-Man-(1-&gt;3)-[alpha-D-Man-(1-&gt;2)-alpha-D-Man-(1-&gt;6)]-alpha-D-Man-(1-&gt;6)]-beta-D-Man-(1-&gt;4)-beta-D-GlcNAc-(1-&gt;4)-alpha-D-GlcNAc-diphospho-di-trans,poly-cis-dolichol + a di-trans,poly-cis-dolichyl phosphate + H(+)</text>
        <dbReference type="Rhea" id="RHEA:31307"/>
        <dbReference type="Rhea" id="RHEA-COMP:19498"/>
        <dbReference type="Rhea" id="RHEA-COMP:19502"/>
        <dbReference type="Rhea" id="RHEA-COMP:19521"/>
        <dbReference type="Rhea" id="RHEA-COMP:19522"/>
        <dbReference type="ChEBI" id="CHEBI:15378"/>
        <dbReference type="ChEBI" id="CHEBI:57525"/>
        <dbReference type="ChEBI" id="CHEBI:57683"/>
        <dbReference type="ChEBI" id="CHEBI:132521"/>
        <dbReference type="ChEBI" id="CHEBI:132522"/>
        <dbReference type="EC" id="2.4.1.265"/>
    </reaction>
    <physiologicalReaction direction="left-to-right" evidence="1">
        <dbReference type="Rhea" id="RHEA:31308"/>
    </physiologicalReaction>
</comment>
<comment type="pathway">
    <text evidence="1">Protein modification; protein glycosylation.</text>
</comment>
<comment type="subcellular location">
    <subcellularLocation>
        <location evidence="1">Endoplasmic reticulum membrane</location>
        <topology evidence="2">Multi-pass membrane protein</topology>
    </subcellularLocation>
</comment>
<comment type="similarity">
    <text evidence="3">Belongs to the ALG6/ALG8 glucosyltransferase family.</text>
</comment>
<organism>
    <name type="scientific">Debaryomyces hansenii (strain ATCC 36239 / CBS 767 / BCRC 21394 / JCM 1990 / NBRC 0083 / IGC 2968)</name>
    <name type="common">Yeast</name>
    <name type="synonym">Torulaspora hansenii</name>
    <dbReference type="NCBI Taxonomy" id="284592"/>
    <lineage>
        <taxon>Eukaryota</taxon>
        <taxon>Fungi</taxon>
        <taxon>Dikarya</taxon>
        <taxon>Ascomycota</taxon>
        <taxon>Saccharomycotina</taxon>
        <taxon>Pichiomycetes</taxon>
        <taxon>Debaryomycetaceae</taxon>
        <taxon>Debaryomyces</taxon>
    </lineage>
</organism>
<reference key="1">
    <citation type="journal article" date="2004" name="Nature">
        <title>Genome evolution in yeasts.</title>
        <authorList>
            <person name="Dujon B."/>
            <person name="Sherman D."/>
            <person name="Fischer G."/>
            <person name="Durrens P."/>
            <person name="Casaregola S."/>
            <person name="Lafontaine I."/>
            <person name="de Montigny J."/>
            <person name="Marck C."/>
            <person name="Neuveglise C."/>
            <person name="Talla E."/>
            <person name="Goffard N."/>
            <person name="Frangeul L."/>
            <person name="Aigle M."/>
            <person name="Anthouard V."/>
            <person name="Babour A."/>
            <person name="Barbe V."/>
            <person name="Barnay S."/>
            <person name="Blanchin S."/>
            <person name="Beckerich J.-M."/>
            <person name="Beyne E."/>
            <person name="Bleykasten C."/>
            <person name="Boisrame A."/>
            <person name="Boyer J."/>
            <person name="Cattolico L."/>
            <person name="Confanioleri F."/>
            <person name="de Daruvar A."/>
            <person name="Despons L."/>
            <person name="Fabre E."/>
            <person name="Fairhead C."/>
            <person name="Ferry-Dumazet H."/>
            <person name="Groppi A."/>
            <person name="Hantraye F."/>
            <person name="Hennequin C."/>
            <person name="Jauniaux N."/>
            <person name="Joyet P."/>
            <person name="Kachouri R."/>
            <person name="Kerrest A."/>
            <person name="Koszul R."/>
            <person name="Lemaire M."/>
            <person name="Lesur I."/>
            <person name="Ma L."/>
            <person name="Muller H."/>
            <person name="Nicaud J.-M."/>
            <person name="Nikolski M."/>
            <person name="Oztas S."/>
            <person name="Ozier-Kalogeropoulos O."/>
            <person name="Pellenz S."/>
            <person name="Potier S."/>
            <person name="Richard G.-F."/>
            <person name="Straub M.-L."/>
            <person name="Suleau A."/>
            <person name="Swennen D."/>
            <person name="Tekaia F."/>
            <person name="Wesolowski-Louvel M."/>
            <person name="Westhof E."/>
            <person name="Wirth B."/>
            <person name="Zeniou-Meyer M."/>
            <person name="Zivanovic Y."/>
            <person name="Bolotin-Fukuhara M."/>
            <person name="Thierry A."/>
            <person name="Bouchier C."/>
            <person name="Caudron B."/>
            <person name="Scarpelli C."/>
            <person name="Gaillardin C."/>
            <person name="Weissenbach J."/>
            <person name="Wincker P."/>
            <person name="Souciet J.-L."/>
        </authorList>
    </citation>
    <scope>NUCLEOTIDE SEQUENCE [LARGE SCALE GENOMIC DNA]</scope>
    <source>
        <strain>ATCC 36239 / CBS 767 / BCRC 21394 / JCM 1990 / NBRC 0083 / IGC 2968</strain>
    </source>
</reference>
<keyword id="KW-0256">Endoplasmic reticulum</keyword>
<keyword id="KW-0328">Glycosyltransferase</keyword>
<keyword id="KW-0472">Membrane</keyword>
<keyword id="KW-1185">Reference proteome</keyword>
<keyword id="KW-0808">Transferase</keyword>
<keyword id="KW-0812">Transmembrane</keyword>
<keyword id="KW-1133">Transmembrane helix</keyword>
<feature type="chain" id="PRO_0000278332" description="Dolichyl pyrophosphate Glc1Man9GlcNAc2 alpha-1,3-glucosyltransferase">
    <location>
        <begin position="1"/>
        <end position="559"/>
    </location>
</feature>
<feature type="topological domain" description="Lumenal" evidence="2">
    <location>
        <begin position="1"/>
        <end position="24"/>
    </location>
</feature>
<feature type="transmembrane region" description="Helical" evidence="2">
    <location>
        <begin position="25"/>
        <end position="45"/>
    </location>
</feature>
<feature type="topological domain" description="Cytoplasmic" evidence="2">
    <location>
        <begin position="46"/>
        <end position="75"/>
    </location>
</feature>
<feature type="transmembrane region" description="Helical" evidence="2">
    <location>
        <begin position="76"/>
        <end position="96"/>
    </location>
</feature>
<feature type="topological domain" description="Lumenal" evidence="2">
    <location>
        <begin position="97"/>
        <end position="122"/>
    </location>
</feature>
<feature type="transmembrane region" description="Helical" evidence="2">
    <location>
        <begin position="123"/>
        <end position="143"/>
    </location>
</feature>
<feature type="topological domain" description="Cytoplasmic" evidence="2">
    <location>
        <begin position="144"/>
        <end position="152"/>
    </location>
</feature>
<feature type="transmembrane region" description="Helical" evidence="2">
    <location>
        <begin position="153"/>
        <end position="173"/>
    </location>
</feature>
<feature type="topological domain" description="Lumenal" evidence="2">
    <location>
        <begin position="174"/>
        <end position="203"/>
    </location>
</feature>
<feature type="transmembrane region" description="Helical" evidence="2">
    <location>
        <begin position="204"/>
        <end position="224"/>
    </location>
</feature>
<feature type="topological domain" description="Cytoplasmic" evidence="2">
    <location>
        <begin position="225"/>
        <end position="249"/>
    </location>
</feature>
<feature type="transmembrane region" description="Helical" evidence="2">
    <location>
        <begin position="250"/>
        <end position="270"/>
    </location>
</feature>
<feature type="topological domain" description="Lumenal" evidence="2">
    <location>
        <begin position="271"/>
        <end position="286"/>
    </location>
</feature>
<feature type="transmembrane region" description="Helical" evidence="2">
    <location>
        <begin position="287"/>
        <end position="309"/>
    </location>
</feature>
<feature type="topological domain" description="Cytoplasmic" evidence="2">
    <location>
        <begin position="310"/>
        <end position="363"/>
    </location>
</feature>
<feature type="transmembrane region" description="Helical" evidence="2">
    <location>
        <begin position="364"/>
        <end position="384"/>
    </location>
</feature>
<feature type="topological domain" description="Lumenal" evidence="2">
    <location>
        <begin position="385"/>
        <end position="394"/>
    </location>
</feature>
<feature type="transmembrane region" description="Helical" evidence="2">
    <location>
        <begin position="395"/>
        <end position="415"/>
    </location>
</feature>
<feature type="topological domain" description="Cytoplasmic" evidence="2">
    <location>
        <begin position="416"/>
        <end position="426"/>
    </location>
</feature>
<feature type="transmembrane region" description="Helical" evidence="2">
    <location>
        <begin position="427"/>
        <end position="447"/>
    </location>
</feature>
<feature type="topological domain" description="Lumenal" evidence="2">
    <location>
        <begin position="448"/>
        <end position="449"/>
    </location>
</feature>
<feature type="transmembrane region" description="Helical" evidence="2">
    <location>
        <begin position="450"/>
        <end position="470"/>
    </location>
</feature>
<feature type="topological domain" description="Cytoplasmic" evidence="2">
    <location>
        <begin position="471"/>
        <end position="493"/>
    </location>
</feature>
<feature type="transmembrane region" description="Helical" evidence="2">
    <location>
        <begin position="494"/>
        <end position="514"/>
    </location>
</feature>
<feature type="topological domain" description="Lumenal" evidence="2">
    <location>
        <begin position="515"/>
        <end position="526"/>
    </location>
</feature>
<feature type="transmembrane region" description="Helical" evidence="2">
    <location>
        <begin position="527"/>
        <end position="547"/>
    </location>
</feature>
<feature type="topological domain" description="Cytoplasmic" evidence="2">
    <location>
        <begin position="548"/>
        <end position="559"/>
    </location>
</feature>
<evidence type="ECO:0000250" key="1">
    <source>
        <dbReference type="UniProtKB" id="P40351"/>
    </source>
</evidence>
<evidence type="ECO:0000255" key="2"/>
<evidence type="ECO:0000305" key="3"/>
<proteinExistence type="inferred from homology"/>
<gene>
    <name type="primary">ALG8</name>
    <name type="ordered locus">DEHA2D17028g</name>
</gene>
<protein>
    <recommendedName>
        <fullName evidence="1">Dolichyl pyrophosphate Glc1Man9GlcNAc2 alpha-1,3-glucosyltransferase</fullName>
        <ecNumber evidence="1">2.4.1.265</ecNumber>
    </recommendedName>
    <alternativeName>
        <fullName>Asparagine-linked glycosylation protein 8</fullName>
    </alternativeName>
    <alternativeName>
        <fullName>Dol-P-Glc:Glc(1)Man(9)GlcNAc(2)-PP-dolichyl alpha-1,3-glucosyltransferase</fullName>
    </alternativeName>
    <alternativeName>
        <fullName>Dolichyl-P-Glc:Glc1Man9GlcNAc2-PP-dolichyl glucosyltransferase</fullName>
    </alternativeName>
</protein>
<name>ALG8_DEBHA</name>